<accession>P66730</accession>
<accession>Q97PA4</accession>
<comment type="function">
    <text evidence="1">Promotes RNA polymerase assembly. Latches the N- and C-terminal regions of the beta' subunit thereby facilitating its interaction with the beta and alpha subunits.</text>
</comment>
<comment type="catalytic activity">
    <reaction evidence="1">
        <text>RNA(n) + a ribonucleoside 5'-triphosphate = RNA(n+1) + diphosphate</text>
        <dbReference type="Rhea" id="RHEA:21248"/>
        <dbReference type="Rhea" id="RHEA-COMP:14527"/>
        <dbReference type="Rhea" id="RHEA-COMP:17342"/>
        <dbReference type="ChEBI" id="CHEBI:33019"/>
        <dbReference type="ChEBI" id="CHEBI:61557"/>
        <dbReference type="ChEBI" id="CHEBI:140395"/>
        <dbReference type="EC" id="2.7.7.6"/>
    </reaction>
</comment>
<comment type="subunit">
    <text evidence="1">The RNAP catalytic core consists of 2 alpha, 1 beta, 1 beta' and 1 omega subunit. When a sigma factor is associated with the core the holoenzyme is formed, which can initiate transcription.</text>
</comment>
<comment type="similarity">
    <text evidence="1">Belongs to the RNA polymerase subunit omega family.</text>
</comment>
<proteinExistence type="inferred from homology"/>
<gene>
    <name evidence="1" type="primary">rpoZ</name>
    <name type="ordered locus">SP_1737</name>
</gene>
<name>RPOZ_STRPN</name>
<protein>
    <recommendedName>
        <fullName evidence="1">DNA-directed RNA polymerase subunit omega</fullName>
        <shortName evidence="1">RNAP omega subunit</shortName>
        <ecNumber evidence="1">2.7.7.6</ecNumber>
    </recommendedName>
    <alternativeName>
        <fullName evidence="1">RNA polymerase omega subunit</fullName>
    </alternativeName>
    <alternativeName>
        <fullName evidence="1">Transcriptase subunit omega</fullName>
    </alternativeName>
</protein>
<keyword id="KW-0240">DNA-directed RNA polymerase</keyword>
<keyword id="KW-0548">Nucleotidyltransferase</keyword>
<keyword id="KW-1185">Reference proteome</keyword>
<keyword id="KW-0804">Transcription</keyword>
<keyword id="KW-0808">Transferase</keyword>
<evidence type="ECO:0000255" key="1">
    <source>
        <dbReference type="HAMAP-Rule" id="MF_00366"/>
    </source>
</evidence>
<evidence type="ECO:0000256" key="2">
    <source>
        <dbReference type="SAM" id="MobiDB-lite"/>
    </source>
</evidence>
<organism>
    <name type="scientific">Streptococcus pneumoniae serotype 4 (strain ATCC BAA-334 / TIGR4)</name>
    <dbReference type="NCBI Taxonomy" id="170187"/>
    <lineage>
        <taxon>Bacteria</taxon>
        <taxon>Bacillati</taxon>
        <taxon>Bacillota</taxon>
        <taxon>Bacilli</taxon>
        <taxon>Lactobacillales</taxon>
        <taxon>Streptococcaceae</taxon>
        <taxon>Streptococcus</taxon>
    </lineage>
</organism>
<feature type="chain" id="PRO_0000128993" description="DNA-directed RNA polymerase subunit omega">
    <location>
        <begin position="1"/>
        <end position="103"/>
    </location>
</feature>
<feature type="region of interest" description="Disordered" evidence="2">
    <location>
        <begin position="52"/>
        <end position="103"/>
    </location>
</feature>
<feature type="compositionally biased region" description="Basic and acidic residues" evidence="2">
    <location>
        <begin position="62"/>
        <end position="103"/>
    </location>
</feature>
<reference key="1">
    <citation type="journal article" date="2001" name="Science">
        <title>Complete genome sequence of a virulent isolate of Streptococcus pneumoniae.</title>
        <authorList>
            <person name="Tettelin H."/>
            <person name="Nelson K.E."/>
            <person name="Paulsen I.T."/>
            <person name="Eisen J.A."/>
            <person name="Read T.D."/>
            <person name="Peterson S.N."/>
            <person name="Heidelberg J.F."/>
            <person name="DeBoy R.T."/>
            <person name="Haft D.H."/>
            <person name="Dodson R.J."/>
            <person name="Durkin A.S."/>
            <person name="Gwinn M.L."/>
            <person name="Kolonay J.F."/>
            <person name="Nelson W.C."/>
            <person name="Peterson J.D."/>
            <person name="Umayam L.A."/>
            <person name="White O."/>
            <person name="Salzberg S.L."/>
            <person name="Lewis M.R."/>
            <person name="Radune D."/>
            <person name="Holtzapple E.K."/>
            <person name="Khouri H.M."/>
            <person name="Wolf A.M."/>
            <person name="Utterback T.R."/>
            <person name="Hansen C.L."/>
            <person name="McDonald L.A."/>
            <person name="Feldblyum T.V."/>
            <person name="Angiuoli S.V."/>
            <person name="Dickinson T."/>
            <person name="Hickey E.K."/>
            <person name="Holt I.E."/>
            <person name="Loftus B.J."/>
            <person name="Yang F."/>
            <person name="Smith H.O."/>
            <person name="Venter J.C."/>
            <person name="Dougherty B.A."/>
            <person name="Morrison D.A."/>
            <person name="Hollingshead S.K."/>
            <person name="Fraser C.M."/>
        </authorList>
    </citation>
    <scope>NUCLEOTIDE SEQUENCE [LARGE SCALE GENOMIC DNA]</scope>
    <source>
        <strain>ATCC BAA-334 / TIGR4</strain>
    </source>
</reference>
<sequence>MLKPSIDTLLDKVPSKYSLVILEAKRAHELEAGAPATQGFKSEKSTLRALEEIESGNVTIHPDPEGKREAVRRRIEEEKRRKEEEEKKIKEQIAKEKEDGEKI</sequence>
<dbReference type="EC" id="2.7.7.6" evidence="1"/>
<dbReference type="EMBL" id="AE005672">
    <property type="protein sequence ID" value="AAK75813.1"/>
    <property type="molecule type" value="Genomic_DNA"/>
</dbReference>
<dbReference type="PIR" id="D95202">
    <property type="entry name" value="D95202"/>
</dbReference>
<dbReference type="SMR" id="P66730"/>
<dbReference type="PaxDb" id="170187-SP_1737"/>
<dbReference type="EnsemblBacteria" id="AAK75813">
    <property type="protein sequence ID" value="AAK75813"/>
    <property type="gene ID" value="SP_1737"/>
</dbReference>
<dbReference type="KEGG" id="spn:SP_1737"/>
<dbReference type="eggNOG" id="COG1758">
    <property type="taxonomic scope" value="Bacteria"/>
</dbReference>
<dbReference type="PhylomeDB" id="P66730"/>
<dbReference type="Proteomes" id="UP000000585">
    <property type="component" value="Chromosome"/>
</dbReference>
<dbReference type="GO" id="GO:0000428">
    <property type="term" value="C:DNA-directed RNA polymerase complex"/>
    <property type="evidence" value="ECO:0007669"/>
    <property type="project" value="UniProtKB-KW"/>
</dbReference>
<dbReference type="GO" id="GO:0003677">
    <property type="term" value="F:DNA binding"/>
    <property type="evidence" value="ECO:0007669"/>
    <property type="project" value="UniProtKB-UniRule"/>
</dbReference>
<dbReference type="GO" id="GO:0003899">
    <property type="term" value="F:DNA-directed RNA polymerase activity"/>
    <property type="evidence" value="ECO:0007669"/>
    <property type="project" value="UniProtKB-UniRule"/>
</dbReference>
<dbReference type="GO" id="GO:0006351">
    <property type="term" value="P:DNA-templated transcription"/>
    <property type="evidence" value="ECO:0007669"/>
    <property type="project" value="UniProtKB-UniRule"/>
</dbReference>
<dbReference type="Gene3D" id="3.90.940.10">
    <property type="match status" value="1"/>
</dbReference>
<dbReference type="HAMAP" id="MF_00366">
    <property type="entry name" value="RNApol_bact_RpoZ"/>
    <property type="match status" value="1"/>
</dbReference>
<dbReference type="InterPro" id="IPR003716">
    <property type="entry name" value="DNA-dir_RNA_pol_omega"/>
</dbReference>
<dbReference type="InterPro" id="IPR006110">
    <property type="entry name" value="Pol_omega/Rpo6/RPB6"/>
</dbReference>
<dbReference type="InterPro" id="IPR036161">
    <property type="entry name" value="RPB6/omega-like_sf"/>
</dbReference>
<dbReference type="NCBIfam" id="TIGR00690">
    <property type="entry name" value="rpoZ"/>
    <property type="match status" value="1"/>
</dbReference>
<dbReference type="PANTHER" id="PTHR34476">
    <property type="entry name" value="DNA-DIRECTED RNA POLYMERASE SUBUNIT OMEGA"/>
    <property type="match status" value="1"/>
</dbReference>
<dbReference type="PANTHER" id="PTHR34476:SF1">
    <property type="entry name" value="DNA-DIRECTED RNA POLYMERASE SUBUNIT OMEGA"/>
    <property type="match status" value="1"/>
</dbReference>
<dbReference type="Pfam" id="PF01192">
    <property type="entry name" value="RNA_pol_Rpb6"/>
    <property type="match status" value="1"/>
</dbReference>
<dbReference type="SMART" id="SM01409">
    <property type="entry name" value="RNA_pol_Rpb6"/>
    <property type="match status" value="1"/>
</dbReference>
<dbReference type="SUPFAM" id="SSF63562">
    <property type="entry name" value="RPB6/omega subunit-like"/>
    <property type="match status" value="1"/>
</dbReference>